<comment type="function">
    <text evidence="1">Catalyzes the transfer of a phosphate group to glutamate to form L-glutamate 5-phosphate.</text>
</comment>
<comment type="catalytic activity">
    <reaction evidence="1">
        <text>L-glutamate + ATP = L-glutamyl 5-phosphate + ADP</text>
        <dbReference type="Rhea" id="RHEA:14877"/>
        <dbReference type="ChEBI" id="CHEBI:29985"/>
        <dbReference type="ChEBI" id="CHEBI:30616"/>
        <dbReference type="ChEBI" id="CHEBI:58274"/>
        <dbReference type="ChEBI" id="CHEBI:456216"/>
        <dbReference type="EC" id="2.7.2.11"/>
    </reaction>
</comment>
<comment type="pathway">
    <text evidence="1">Amino-acid biosynthesis; L-proline biosynthesis; L-glutamate 5-semialdehyde from L-glutamate: step 1/2.</text>
</comment>
<comment type="subcellular location">
    <subcellularLocation>
        <location evidence="1">Cytoplasm</location>
    </subcellularLocation>
</comment>
<comment type="similarity">
    <text evidence="1">Belongs to the glutamate 5-kinase family.</text>
</comment>
<gene>
    <name evidence="1" type="primary">proB</name>
    <name type="ordered locus">RPA0163</name>
</gene>
<sequence>MASPKLHDFRHIVVKVGSSLLIDSAAGEVRAGWLAALAADIAELHRGGRDVMVVSSGSIALGRSRLKLPRGPLKLEESQAAAAVGQIELARTWSEVLGAHGIGAGQILVTFQDTEERRRYLNARSTIAKLLEWRAVPVINENDTVATTEIRYGDNDRLAARVATMASADLLILLSDIDGLYTAPPGSNPDATLIPVVEAITAEIEGMAGAAGSELSRGGMRTKIEAAKIATSAGTHMLIASGKIDHPLKAIADGGKCTWFLTPANPVTARKRWIAGTLEPKGTLTIDAGAVSALRAGKSLLPAGVIRVDGQFSRGDAVIVRGPDTHEIGRGLVAYDAEDAEKIKGHSSPDVMMILGITGRAEMIHRDDLVVGTAPT</sequence>
<accession>Q6NDE5</accession>
<dbReference type="EC" id="2.7.2.11" evidence="1"/>
<dbReference type="EMBL" id="BX572593">
    <property type="protein sequence ID" value="CAE25607.1"/>
    <property type="molecule type" value="Genomic_DNA"/>
</dbReference>
<dbReference type="RefSeq" id="WP_011155731.1">
    <property type="nucleotide sequence ID" value="NZ_CP116810.1"/>
</dbReference>
<dbReference type="SMR" id="Q6NDE5"/>
<dbReference type="STRING" id="258594.RPA0163"/>
<dbReference type="GeneID" id="66891168"/>
<dbReference type="eggNOG" id="COG0263">
    <property type="taxonomic scope" value="Bacteria"/>
</dbReference>
<dbReference type="HOGENOM" id="CLU_025400_2_0_5"/>
<dbReference type="PhylomeDB" id="Q6NDE5"/>
<dbReference type="UniPathway" id="UPA00098">
    <property type="reaction ID" value="UER00359"/>
</dbReference>
<dbReference type="GO" id="GO:0005829">
    <property type="term" value="C:cytosol"/>
    <property type="evidence" value="ECO:0007669"/>
    <property type="project" value="TreeGrafter"/>
</dbReference>
<dbReference type="GO" id="GO:0005524">
    <property type="term" value="F:ATP binding"/>
    <property type="evidence" value="ECO:0007669"/>
    <property type="project" value="UniProtKB-KW"/>
</dbReference>
<dbReference type="GO" id="GO:0004349">
    <property type="term" value="F:glutamate 5-kinase activity"/>
    <property type="evidence" value="ECO:0007669"/>
    <property type="project" value="UniProtKB-UniRule"/>
</dbReference>
<dbReference type="GO" id="GO:0003723">
    <property type="term" value="F:RNA binding"/>
    <property type="evidence" value="ECO:0007669"/>
    <property type="project" value="InterPro"/>
</dbReference>
<dbReference type="GO" id="GO:0055129">
    <property type="term" value="P:L-proline biosynthetic process"/>
    <property type="evidence" value="ECO:0007669"/>
    <property type="project" value="UniProtKB-UniRule"/>
</dbReference>
<dbReference type="CDD" id="cd04242">
    <property type="entry name" value="AAK_G5K_ProB"/>
    <property type="match status" value="1"/>
</dbReference>
<dbReference type="CDD" id="cd21157">
    <property type="entry name" value="PUA_G5K"/>
    <property type="match status" value="1"/>
</dbReference>
<dbReference type="FunFam" id="2.30.130.10:FF:000007">
    <property type="entry name" value="Glutamate 5-kinase"/>
    <property type="match status" value="1"/>
</dbReference>
<dbReference type="FunFam" id="3.40.1160.10:FF:000018">
    <property type="entry name" value="Glutamate 5-kinase"/>
    <property type="match status" value="1"/>
</dbReference>
<dbReference type="Gene3D" id="3.40.1160.10">
    <property type="entry name" value="Acetylglutamate kinase-like"/>
    <property type="match status" value="1"/>
</dbReference>
<dbReference type="Gene3D" id="2.30.130.10">
    <property type="entry name" value="PUA domain"/>
    <property type="match status" value="1"/>
</dbReference>
<dbReference type="HAMAP" id="MF_00456">
    <property type="entry name" value="ProB"/>
    <property type="match status" value="1"/>
</dbReference>
<dbReference type="InterPro" id="IPR036393">
    <property type="entry name" value="AceGlu_kinase-like_sf"/>
</dbReference>
<dbReference type="InterPro" id="IPR001048">
    <property type="entry name" value="Asp/Glu/Uridylate_kinase"/>
</dbReference>
<dbReference type="InterPro" id="IPR041739">
    <property type="entry name" value="G5K_ProB"/>
</dbReference>
<dbReference type="InterPro" id="IPR001057">
    <property type="entry name" value="Glu/AcGlu_kinase"/>
</dbReference>
<dbReference type="InterPro" id="IPR011529">
    <property type="entry name" value="Glu_5kinase"/>
</dbReference>
<dbReference type="InterPro" id="IPR005715">
    <property type="entry name" value="Glu_5kinase/COase_Synthase"/>
</dbReference>
<dbReference type="InterPro" id="IPR019797">
    <property type="entry name" value="Glutamate_5-kinase_CS"/>
</dbReference>
<dbReference type="InterPro" id="IPR002478">
    <property type="entry name" value="PUA"/>
</dbReference>
<dbReference type="InterPro" id="IPR015947">
    <property type="entry name" value="PUA-like_sf"/>
</dbReference>
<dbReference type="InterPro" id="IPR036974">
    <property type="entry name" value="PUA_sf"/>
</dbReference>
<dbReference type="NCBIfam" id="TIGR01027">
    <property type="entry name" value="proB"/>
    <property type="match status" value="1"/>
</dbReference>
<dbReference type="PANTHER" id="PTHR43654">
    <property type="entry name" value="GLUTAMATE 5-KINASE"/>
    <property type="match status" value="1"/>
</dbReference>
<dbReference type="PANTHER" id="PTHR43654:SF1">
    <property type="entry name" value="ISOPENTENYL PHOSPHATE KINASE"/>
    <property type="match status" value="1"/>
</dbReference>
<dbReference type="Pfam" id="PF00696">
    <property type="entry name" value="AA_kinase"/>
    <property type="match status" value="1"/>
</dbReference>
<dbReference type="Pfam" id="PF01472">
    <property type="entry name" value="PUA"/>
    <property type="match status" value="1"/>
</dbReference>
<dbReference type="PIRSF" id="PIRSF000729">
    <property type="entry name" value="GK"/>
    <property type="match status" value="1"/>
</dbReference>
<dbReference type="PRINTS" id="PR00474">
    <property type="entry name" value="GLU5KINASE"/>
</dbReference>
<dbReference type="SMART" id="SM00359">
    <property type="entry name" value="PUA"/>
    <property type="match status" value="1"/>
</dbReference>
<dbReference type="SUPFAM" id="SSF53633">
    <property type="entry name" value="Carbamate kinase-like"/>
    <property type="match status" value="1"/>
</dbReference>
<dbReference type="SUPFAM" id="SSF88697">
    <property type="entry name" value="PUA domain-like"/>
    <property type="match status" value="1"/>
</dbReference>
<dbReference type="PROSITE" id="PS00902">
    <property type="entry name" value="GLUTAMATE_5_KINASE"/>
    <property type="match status" value="1"/>
</dbReference>
<dbReference type="PROSITE" id="PS50890">
    <property type="entry name" value="PUA"/>
    <property type="match status" value="1"/>
</dbReference>
<keyword id="KW-0028">Amino-acid biosynthesis</keyword>
<keyword id="KW-0067">ATP-binding</keyword>
<keyword id="KW-0963">Cytoplasm</keyword>
<keyword id="KW-0418">Kinase</keyword>
<keyword id="KW-0547">Nucleotide-binding</keyword>
<keyword id="KW-0641">Proline biosynthesis</keyword>
<keyword id="KW-0808">Transferase</keyword>
<organism>
    <name type="scientific">Rhodopseudomonas palustris (strain ATCC BAA-98 / CGA009)</name>
    <dbReference type="NCBI Taxonomy" id="258594"/>
    <lineage>
        <taxon>Bacteria</taxon>
        <taxon>Pseudomonadati</taxon>
        <taxon>Pseudomonadota</taxon>
        <taxon>Alphaproteobacteria</taxon>
        <taxon>Hyphomicrobiales</taxon>
        <taxon>Nitrobacteraceae</taxon>
        <taxon>Rhodopseudomonas</taxon>
    </lineage>
</organism>
<name>PROB_RHOPA</name>
<reference key="1">
    <citation type="journal article" date="2004" name="Nat. Biotechnol.">
        <title>Complete genome sequence of the metabolically versatile photosynthetic bacterium Rhodopseudomonas palustris.</title>
        <authorList>
            <person name="Larimer F.W."/>
            <person name="Chain P."/>
            <person name="Hauser L."/>
            <person name="Lamerdin J.E."/>
            <person name="Malfatti S."/>
            <person name="Do L."/>
            <person name="Land M.L."/>
            <person name="Pelletier D.A."/>
            <person name="Beatty J.T."/>
            <person name="Lang A.S."/>
            <person name="Tabita F.R."/>
            <person name="Gibson J.L."/>
            <person name="Hanson T.E."/>
            <person name="Bobst C."/>
            <person name="Torres y Torres J.L."/>
            <person name="Peres C."/>
            <person name="Harrison F.H."/>
            <person name="Gibson J."/>
            <person name="Harwood C.S."/>
        </authorList>
    </citation>
    <scope>NUCLEOTIDE SEQUENCE [LARGE SCALE GENOMIC DNA]</scope>
    <source>
        <strain>ATCC BAA-98 / CGA009</strain>
    </source>
</reference>
<protein>
    <recommendedName>
        <fullName evidence="1">Glutamate 5-kinase</fullName>
        <ecNumber evidence="1">2.7.2.11</ecNumber>
    </recommendedName>
    <alternativeName>
        <fullName evidence="1">Gamma-glutamyl kinase</fullName>
        <shortName evidence="1">GK</shortName>
    </alternativeName>
</protein>
<evidence type="ECO:0000255" key="1">
    <source>
        <dbReference type="HAMAP-Rule" id="MF_00456"/>
    </source>
</evidence>
<proteinExistence type="inferred from homology"/>
<feature type="chain" id="PRO_0000109718" description="Glutamate 5-kinase">
    <location>
        <begin position="1"/>
        <end position="376"/>
    </location>
</feature>
<feature type="domain" description="PUA" evidence="1">
    <location>
        <begin position="281"/>
        <end position="358"/>
    </location>
</feature>
<feature type="binding site" evidence="1">
    <location>
        <position position="15"/>
    </location>
    <ligand>
        <name>ATP</name>
        <dbReference type="ChEBI" id="CHEBI:30616"/>
    </ligand>
</feature>
<feature type="binding site" evidence="1">
    <location>
        <position position="56"/>
    </location>
    <ligand>
        <name>substrate</name>
    </ligand>
</feature>
<feature type="binding site" evidence="1">
    <location>
        <position position="143"/>
    </location>
    <ligand>
        <name>substrate</name>
    </ligand>
</feature>
<feature type="binding site" evidence="1">
    <location>
        <position position="155"/>
    </location>
    <ligand>
        <name>substrate</name>
    </ligand>
</feature>
<feature type="binding site" evidence="1">
    <location>
        <begin position="175"/>
        <end position="176"/>
    </location>
    <ligand>
        <name>ATP</name>
        <dbReference type="ChEBI" id="CHEBI:30616"/>
    </ligand>
</feature>